<feature type="chain" id="PRO_0000307491" description="Triosephosphate isomerase">
    <location>
        <begin position="1"/>
        <end position="249"/>
    </location>
</feature>
<feature type="active site" description="Electrophile" evidence="1">
    <location>
        <position position="95"/>
    </location>
</feature>
<feature type="active site" description="Proton acceptor" evidence="1">
    <location>
        <position position="166"/>
    </location>
</feature>
<feature type="binding site" evidence="1">
    <location>
        <begin position="9"/>
        <end position="11"/>
    </location>
    <ligand>
        <name>substrate</name>
    </ligand>
</feature>
<feature type="binding site" evidence="1">
    <location>
        <position position="172"/>
    </location>
    <ligand>
        <name>substrate</name>
    </ligand>
</feature>
<feature type="binding site" evidence="1">
    <location>
        <position position="211"/>
    </location>
    <ligand>
        <name>substrate</name>
    </ligand>
</feature>
<feature type="binding site" evidence="1">
    <location>
        <begin position="232"/>
        <end position="233"/>
    </location>
    <ligand>
        <name>substrate</name>
    </ligand>
</feature>
<proteinExistence type="inferred from homology"/>
<dbReference type="EC" id="5.3.1.1" evidence="1"/>
<dbReference type="EMBL" id="CR628337">
    <property type="protein sequence ID" value="CAH16948.1"/>
    <property type="molecule type" value="Genomic_DNA"/>
</dbReference>
<dbReference type="RefSeq" id="WP_011216634.1">
    <property type="nucleotide sequence ID" value="NC_006369.1"/>
</dbReference>
<dbReference type="SMR" id="Q5WT18"/>
<dbReference type="KEGG" id="lpf:lpl2707"/>
<dbReference type="LegioList" id="lpl2707"/>
<dbReference type="HOGENOM" id="CLU_024251_2_1_6"/>
<dbReference type="UniPathway" id="UPA00109">
    <property type="reaction ID" value="UER00189"/>
</dbReference>
<dbReference type="UniPathway" id="UPA00138"/>
<dbReference type="Proteomes" id="UP000002517">
    <property type="component" value="Chromosome"/>
</dbReference>
<dbReference type="GO" id="GO:0005829">
    <property type="term" value="C:cytosol"/>
    <property type="evidence" value="ECO:0007669"/>
    <property type="project" value="TreeGrafter"/>
</dbReference>
<dbReference type="GO" id="GO:0004807">
    <property type="term" value="F:triose-phosphate isomerase activity"/>
    <property type="evidence" value="ECO:0007669"/>
    <property type="project" value="UniProtKB-UniRule"/>
</dbReference>
<dbReference type="GO" id="GO:0006094">
    <property type="term" value="P:gluconeogenesis"/>
    <property type="evidence" value="ECO:0007669"/>
    <property type="project" value="UniProtKB-UniRule"/>
</dbReference>
<dbReference type="GO" id="GO:0046166">
    <property type="term" value="P:glyceraldehyde-3-phosphate biosynthetic process"/>
    <property type="evidence" value="ECO:0007669"/>
    <property type="project" value="TreeGrafter"/>
</dbReference>
<dbReference type="GO" id="GO:0019563">
    <property type="term" value="P:glycerol catabolic process"/>
    <property type="evidence" value="ECO:0007669"/>
    <property type="project" value="TreeGrafter"/>
</dbReference>
<dbReference type="GO" id="GO:0006096">
    <property type="term" value="P:glycolytic process"/>
    <property type="evidence" value="ECO:0007669"/>
    <property type="project" value="UniProtKB-UniRule"/>
</dbReference>
<dbReference type="CDD" id="cd00311">
    <property type="entry name" value="TIM"/>
    <property type="match status" value="1"/>
</dbReference>
<dbReference type="FunFam" id="3.20.20.70:FF:000020">
    <property type="entry name" value="Triosephosphate isomerase"/>
    <property type="match status" value="1"/>
</dbReference>
<dbReference type="Gene3D" id="3.20.20.70">
    <property type="entry name" value="Aldolase class I"/>
    <property type="match status" value="1"/>
</dbReference>
<dbReference type="HAMAP" id="MF_00147_B">
    <property type="entry name" value="TIM_B"/>
    <property type="match status" value="1"/>
</dbReference>
<dbReference type="InterPro" id="IPR013785">
    <property type="entry name" value="Aldolase_TIM"/>
</dbReference>
<dbReference type="InterPro" id="IPR035990">
    <property type="entry name" value="TIM_sf"/>
</dbReference>
<dbReference type="InterPro" id="IPR022896">
    <property type="entry name" value="TrioseP_Isoase_bac/euk"/>
</dbReference>
<dbReference type="InterPro" id="IPR000652">
    <property type="entry name" value="Triosephosphate_isomerase"/>
</dbReference>
<dbReference type="InterPro" id="IPR020861">
    <property type="entry name" value="Triosephosphate_isomerase_AS"/>
</dbReference>
<dbReference type="NCBIfam" id="TIGR00419">
    <property type="entry name" value="tim"/>
    <property type="match status" value="1"/>
</dbReference>
<dbReference type="PANTHER" id="PTHR21139">
    <property type="entry name" value="TRIOSEPHOSPHATE ISOMERASE"/>
    <property type="match status" value="1"/>
</dbReference>
<dbReference type="PANTHER" id="PTHR21139:SF42">
    <property type="entry name" value="TRIOSEPHOSPHATE ISOMERASE"/>
    <property type="match status" value="1"/>
</dbReference>
<dbReference type="Pfam" id="PF00121">
    <property type="entry name" value="TIM"/>
    <property type="match status" value="1"/>
</dbReference>
<dbReference type="SUPFAM" id="SSF51351">
    <property type="entry name" value="Triosephosphate isomerase (TIM)"/>
    <property type="match status" value="1"/>
</dbReference>
<dbReference type="PROSITE" id="PS00171">
    <property type="entry name" value="TIM_1"/>
    <property type="match status" value="1"/>
</dbReference>
<dbReference type="PROSITE" id="PS51440">
    <property type="entry name" value="TIM_2"/>
    <property type="match status" value="1"/>
</dbReference>
<keyword id="KW-0963">Cytoplasm</keyword>
<keyword id="KW-0312">Gluconeogenesis</keyword>
<keyword id="KW-0324">Glycolysis</keyword>
<keyword id="KW-0413">Isomerase</keyword>
<gene>
    <name evidence="1" type="primary">tpiA</name>
    <name type="ordered locus">lpl2707</name>
</gene>
<reference key="1">
    <citation type="journal article" date="2004" name="Nat. Genet.">
        <title>Evidence in the Legionella pneumophila genome for exploitation of host cell functions and high genome plasticity.</title>
        <authorList>
            <person name="Cazalet C."/>
            <person name="Rusniok C."/>
            <person name="Brueggemann H."/>
            <person name="Zidane N."/>
            <person name="Magnier A."/>
            <person name="Ma L."/>
            <person name="Tichit M."/>
            <person name="Jarraud S."/>
            <person name="Bouchier C."/>
            <person name="Vandenesch F."/>
            <person name="Kunst F."/>
            <person name="Etienne J."/>
            <person name="Glaser P."/>
            <person name="Buchrieser C."/>
        </authorList>
    </citation>
    <scope>NUCLEOTIDE SEQUENCE [LARGE SCALE GENOMIC DNA]</scope>
    <source>
        <strain>Lens</strain>
    </source>
</reference>
<evidence type="ECO:0000255" key="1">
    <source>
        <dbReference type="HAMAP-Rule" id="MF_00147"/>
    </source>
</evidence>
<accession>Q5WT18</accession>
<comment type="function">
    <text evidence="1">Involved in the gluconeogenesis. Catalyzes stereospecifically the conversion of dihydroxyacetone phosphate (DHAP) to D-glyceraldehyde-3-phosphate (G3P).</text>
</comment>
<comment type="catalytic activity">
    <reaction evidence="1">
        <text>D-glyceraldehyde 3-phosphate = dihydroxyacetone phosphate</text>
        <dbReference type="Rhea" id="RHEA:18585"/>
        <dbReference type="ChEBI" id="CHEBI:57642"/>
        <dbReference type="ChEBI" id="CHEBI:59776"/>
        <dbReference type="EC" id="5.3.1.1"/>
    </reaction>
</comment>
<comment type="pathway">
    <text evidence="1">Carbohydrate biosynthesis; gluconeogenesis.</text>
</comment>
<comment type="pathway">
    <text evidence="1">Carbohydrate degradation; glycolysis; D-glyceraldehyde 3-phosphate from glycerone phosphate: step 1/1.</text>
</comment>
<comment type="subunit">
    <text evidence="1">Homodimer.</text>
</comment>
<comment type="subcellular location">
    <subcellularLocation>
        <location evidence="1">Cytoplasm</location>
    </subcellularLocation>
</comment>
<comment type="similarity">
    <text evidence="1">Belongs to the triosephosphate isomerase family.</text>
</comment>
<name>TPIS_LEGPL</name>
<organism>
    <name type="scientific">Legionella pneumophila (strain Lens)</name>
    <dbReference type="NCBI Taxonomy" id="297245"/>
    <lineage>
        <taxon>Bacteria</taxon>
        <taxon>Pseudomonadati</taxon>
        <taxon>Pseudomonadota</taxon>
        <taxon>Gammaproteobacteria</taxon>
        <taxon>Legionellales</taxon>
        <taxon>Legionellaceae</taxon>
        <taxon>Legionella</taxon>
    </lineage>
</organism>
<sequence>MRQKIVAGNWKMNGQIQQVTELVSQIEKLIGFDCAAQVAVMPPSIYIPKVRDCLRTGKIVVGAQNVYPKDYGAYTGELSAPMLKDFDCRYVLVGHSERRQFFHEDENFVAQKFHHVKDHGMIPVLCVGETLSERENGKTEQVIAQQVLAVSAKGKDCFRDCVVAYEPVWAIGTGKTATPEQAQKIHQFIRDLVGEINDSDAKHLTLIYGGSVNENNAKALFSMPDIDGGLVGGASLNAKQFVEIVKCIN</sequence>
<protein>
    <recommendedName>
        <fullName evidence="1">Triosephosphate isomerase</fullName>
        <shortName evidence="1">TIM</shortName>
        <shortName evidence="1">TPI</shortName>
        <ecNumber evidence="1">5.3.1.1</ecNumber>
    </recommendedName>
    <alternativeName>
        <fullName evidence="1">Triose-phosphate isomerase</fullName>
    </alternativeName>
</protein>